<accession>C0ZIH0</accession>
<sequence>MAGKVIQSGRHRQRRTYSRINEVLGLPNLIEIQQKSYQWFLDEGLREMFQDISPIQDFTGNLVLEFIDYSLGEPKYDVDESKERDVTYAAPLRVKVRLLNKETGEVKEQEVFMGDFPLMTETGTFIINGAERVIVSQLVRSPSVYYNTKVDKNGKQTFTATVIPNRGAWLELETDAKDVIYVRIDRTRKIPVTVLLRALGFGSDIEILNLLGEDEYIKNTLEKDNTDSTEKALIEIYERLRPGEPPTVENAKSLLISRFFDPKRYDLASVGRYKMNKKLHLKNRLYNQRLAETLIDTTTGEIFAEAGQMIDRRVLERIVPALEGSIGFIDVRTHGGVLEDEAIHLQSINIFSPIEDGKIIKVIGNGNVDKSFKHITPADIVSAINYFMNLLHSVGSTDDIDHLGNRRLRSVGELLQNQFRIGLSRMERVVRERMSIQDQNQITPQALINIRPVIASLKEFFGSSQLSQFMDQTNPLAELTHKRRLSALGPGGLTRERAGFEVRDVHHSHYGRMCPIETPEGPNIGLINSLSSFARINDYGFIETPRRKVDPETGFVLTDISYLTADEEDVFNVAQANQPLDEDGRFVNDMVICRRKGEILSVPRDKVDFMDVSPKQVVSVATALIPFLENDDANRALMGSNMQRQAVPLLIPQAPFVGTGMEHKAAQDSGVAIVAKHPGQVERVTAREIWIRRYQEIDGRKVAGDLDKYKMHKFIRSNQGTCINQRPIVSTGDWIEKGDIVGDGPSTEKGELALGRNVIVAFMTWEGYNYEDAILLSEKLVKDDVYTSIHIEEYESEARDTKLGPEEITRDIPNVGEDALKNLDERGIIRVGAEIQDGDILVGKVTPKGVTELTAEERLLHAIFGEKAREVRDTSLRVPHGGSGIIVDVKVFTRENGDELPPGVNQLVRVYIAQKRKISVGDKMAGRHGNKGVIARIMAEEDMPFLPDGSPVEIVLNPLGVPSRMNIGQVLETHLGMAAKLLGIHVATPVFDGARQAEVFETLAEAGLDRDGKTILFDGRTGEPFDRRVTVGCVYMLKLAHLVDDKIHARSTGPYSLVTQQPLGGKAQFGGQRFGEMEVWALEAYGAAYTLQEILTVKSDDVVGRVKTYEAIVKGENVPEPGVPESFKVLIKELQSLGMDVKILSGDEQEIEMREMEDEDEGNGEKLNLVLEGGSLNEE</sequence>
<evidence type="ECO:0000255" key="1">
    <source>
        <dbReference type="HAMAP-Rule" id="MF_01321"/>
    </source>
</evidence>
<evidence type="ECO:0000256" key="2">
    <source>
        <dbReference type="SAM" id="MobiDB-lite"/>
    </source>
</evidence>
<comment type="function">
    <text evidence="1">DNA-dependent RNA polymerase catalyzes the transcription of DNA into RNA using the four ribonucleoside triphosphates as substrates.</text>
</comment>
<comment type="catalytic activity">
    <reaction evidence="1">
        <text>RNA(n) + a ribonucleoside 5'-triphosphate = RNA(n+1) + diphosphate</text>
        <dbReference type="Rhea" id="RHEA:21248"/>
        <dbReference type="Rhea" id="RHEA-COMP:14527"/>
        <dbReference type="Rhea" id="RHEA-COMP:17342"/>
        <dbReference type="ChEBI" id="CHEBI:33019"/>
        <dbReference type="ChEBI" id="CHEBI:61557"/>
        <dbReference type="ChEBI" id="CHEBI:140395"/>
        <dbReference type="EC" id="2.7.7.6"/>
    </reaction>
</comment>
<comment type="subunit">
    <text evidence="1">The RNAP catalytic core consists of 2 alpha, 1 beta, 1 beta' and 1 omega subunit. When a sigma factor is associated with the core the holoenzyme is formed, which can initiate transcription.</text>
</comment>
<comment type="similarity">
    <text evidence="1">Belongs to the RNA polymerase beta chain family.</text>
</comment>
<feature type="chain" id="PRO_1000165792" description="DNA-directed RNA polymerase subunit beta">
    <location>
        <begin position="1"/>
        <end position="1179"/>
    </location>
</feature>
<feature type="region of interest" description="Disordered" evidence="2">
    <location>
        <begin position="1153"/>
        <end position="1179"/>
    </location>
</feature>
<feature type="compositionally biased region" description="Acidic residues" evidence="2">
    <location>
        <begin position="1153"/>
        <end position="1162"/>
    </location>
</feature>
<gene>
    <name evidence="1" type="primary">rpoB</name>
    <name type="ordered locus">BBR47_02110</name>
</gene>
<organism>
    <name type="scientific">Brevibacillus brevis (strain 47 / JCM 6285 / NBRC 100599)</name>
    <dbReference type="NCBI Taxonomy" id="358681"/>
    <lineage>
        <taxon>Bacteria</taxon>
        <taxon>Bacillati</taxon>
        <taxon>Bacillota</taxon>
        <taxon>Bacilli</taxon>
        <taxon>Bacillales</taxon>
        <taxon>Paenibacillaceae</taxon>
        <taxon>Brevibacillus</taxon>
    </lineage>
</organism>
<dbReference type="EC" id="2.7.7.6" evidence="1"/>
<dbReference type="EMBL" id="AP008955">
    <property type="protein sequence ID" value="BAH41188.1"/>
    <property type="molecule type" value="Genomic_DNA"/>
</dbReference>
<dbReference type="RefSeq" id="WP_012683975.1">
    <property type="nucleotide sequence ID" value="NC_012491.1"/>
</dbReference>
<dbReference type="SMR" id="C0ZIH0"/>
<dbReference type="STRING" id="358681.BBR47_02110"/>
<dbReference type="KEGG" id="bbe:BBR47_02110"/>
<dbReference type="eggNOG" id="COG0085">
    <property type="taxonomic scope" value="Bacteria"/>
</dbReference>
<dbReference type="HOGENOM" id="CLU_000524_4_1_9"/>
<dbReference type="Proteomes" id="UP000001877">
    <property type="component" value="Chromosome"/>
</dbReference>
<dbReference type="GO" id="GO:0000428">
    <property type="term" value="C:DNA-directed RNA polymerase complex"/>
    <property type="evidence" value="ECO:0007669"/>
    <property type="project" value="UniProtKB-KW"/>
</dbReference>
<dbReference type="GO" id="GO:0003677">
    <property type="term" value="F:DNA binding"/>
    <property type="evidence" value="ECO:0007669"/>
    <property type="project" value="UniProtKB-UniRule"/>
</dbReference>
<dbReference type="GO" id="GO:0003899">
    <property type="term" value="F:DNA-directed RNA polymerase activity"/>
    <property type="evidence" value="ECO:0007669"/>
    <property type="project" value="UniProtKB-UniRule"/>
</dbReference>
<dbReference type="GO" id="GO:0032549">
    <property type="term" value="F:ribonucleoside binding"/>
    <property type="evidence" value="ECO:0007669"/>
    <property type="project" value="InterPro"/>
</dbReference>
<dbReference type="GO" id="GO:0006351">
    <property type="term" value="P:DNA-templated transcription"/>
    <property type="evidence" value="ECO:0007669"/>
    <property type="project" value="UniProtKB-UniRule"/>
</dbReference>
<dbReference type="CDD" id="cd00653">
    <property type="entry name" value="RNA_pol_B_RPB2"/>
    <property type="match status" value="1"/>
</dbReference>
<dbReference type="FunFam" id="3.90.1800.10:FF:000001">
    <property type="entry name" value="DNA-directed RNA polymerase subunit beta"/>
    <property type="match status" value="1"/>
</dbReference>
<dbReference type="Gene3D" id="2.40.50.100">
    <property type="match status" value="1"/>
</dbReference>
<dbReference type="Gene3D" id="2.40.50.150">
    <property type="match status" value="1"/>
</dbReference>
<dbReference type="Gene3D" id="3.90.1100.10">
    <property type="match status" value="1"/>
</dbReference>
<dbReference type="Gene3D" id="2.30.150.10">
    <property type="entry name" value="DNA-directed RNA polymerase, beta subunit, external 1 domain"/>
    <property type="match status" value="1"/>
</dbReference>
<dbReference type="Gene3D" id="2.40.270.10">
    <property type="entry name" value="DNA-directed RNA polymerase, subunit 2, domain 6"/>
    <property type="match status" value="1"/>
</dbReference>
<dbReference type="Gene3D" id="3.90.1800.10">
    <property type="entry name" value="RNA polymerase alpha subunit dimerisation domain"/>
    <property type="match status" value="1"/>
</dbReference>
<dbReference type="Gene3D" id="3.90.1110.10">
    <property type="entry name" value="RNA polymerase Rpb2, domain 2"/>
    <property type="match status" value="1"/>
</dbReference>
<dbReference type="HAMAP" id="MF_01321">
    <property type="entry name" value="RNApol_bact_RpoB"/>
    <property type="match status" value="1"/>
</dbReference>
<dbReference type="InterPro" id="IPR042107">
    <property type="entry name" value="DNA-dir_RNA_pol_bsu_ext_1_sf"/>
</dbReference>
<dbReference type="InterPro" id="IPR019462">
    <property type="entry name" value="DNA-dir_RNA_pol_bsu_external_1"/>
</dbReference>
<dbReference type="InterPro" id="IPR015712">
    <property type="entry name" value="DNA-dir_RNA_pol_su2"/>
</dbReference>
<dbReference type="InterPro" id="IPR007120">
    <property type="entry name" value="DNA-dir_RNAP_su2_dom"/>
</dbReference>
<dbReference type="InterPro" id="IPR037033">
    <property type="entry name" value="DNA-dir_RNAP_su2_hyb_sf"/>
</dbReference>
<dbReference type="InterPro" id="IPR010243">
    <property type="entry name" value="RNA_pol_bsu_bac"/>
</dbReference>
<dbReference type="InterPro" id="IPR007121">
    <property type="entry name" value="RNA_pol_bsu_CS"/>
</dbReference>
<dbReference type="InterPro" id="IPR007644">
    <property type="entry name" value="RNA_pol_bsu_protrusion"/>
</dbReference>
<dbReference type="InterPro" id="IPR007642">
    <property type="entry name" value="RNA_pol_Rpb2_2"/>
</dbReference>
<dbReference type="InterPro" id="IPR037034">
    <property type="entry name" value="RNA_pol_Rpb2_2_sf"/>
</dbReference>
<dbReference type="InterPro" id="IPR007645">
    <property type="entry name" value="RNA_pol_Rpb2_3"/>
</dbReference>
<dbReference type="InterPro" id="IPR007641">
    <property type="entry name" value="RNA_pol_Rpb2_7"/>
</dbReference>
<dbReference type="InterPro" id="IPR014724">
    <property type="entry name" value="RNA_pol_RPB2_OB-fold"/>
</dbReference>
<dbReference type="NCBIfam" id="NF001616">
    <property type="entry name" value="PRK00405.1"/>
    <property type="match status" value="1"/>
</dbReference>
<dbReference type="NCBIfam" id="TIGR02013">
    <property type="entry name" value="rpoB"/>
    <property type="match status" value="1"/>
</dbReference>
<dbReference type="PANTHER" id="PTHR20856">
    <property type="entry name" value="DNA-DIRECTED RNA POLYMERASE I SUBUNIT 2"/>
    <property type="match status" value="1"/>
</dbReference>
<dbReference type="Pfam" id="PF04563">
    <property type="entry name" value="RNA_pol_Rpb2_1"/>
    <property type="match status" value="1"/>
</dbReference>
<dbReference type="Pfam" id="PF04561">
    <property type="entry name" value="RNA_pol_Rpb2_2"/>
    <property type="match status" value="2"/>
</dbReference>
<dbReference type="Pfam" id="PF04565">
    <property type="entry name" value="RNA_pol_Rpb2_3"/>
    <property type="match status" value="1"/>
</dbReference>
<dbReference type="Pfam" id="PF10385">
    <property type="entry name" value="RNA_pol_Rpb2_45"/>
    <property type="match status" value="1"/>
</dbReference>
<dbReference type="Pfam" id="PF00562">
    <property type="entry name" value="RNA_pol_Rpb2_6"/>
    <property type="match status" value="1"/>
</dbReference>
<dbReference type="Pfam" id="PF04560">
    <property type="entry name" value="RNA_pol_Rpb2_7"/>
    <property type="match status" value="1"/>
</dbReference>
<dbReference type="SUPFAM" id="SSF64484">
    <property type="entry name" value="beta and beta-prime subunits of DNA dependent RNA-polymerase"/>
    <property type="match status" value="1"/>
</dbReference>
<dbReference type="PROSITE" id="PS01166">
    <property type="entry name" value="RNA_POL_BETA"/>
    <property type="match status" value="1"/>
</dbReference>
<name>RPOB_BREBN</name>
<protein>
    <recommendedName>
        <fullName evidence="1">DNA-directed RNA polymerase subunit beta</fullName>
        <shortName evidence="1">RNAP subunit beta</shortName>
        <ecNumber evidence="1">2.7.7.6</ecNumber>
    </recommendedName>
    <alternativeName>
        <fullName evidence="1">RNA polymerase subunit beta</fullName>
    </alternativeName>
    <alternativeName>
        <fullName evidence="1">Transcriptase subunit beta</fullName>
    </alternativeName>
</protein>
<proteinExistence type="inferred from homology"/>
<reference key="1">
    <citation type="submission" date="2005-03" db="EMBL/GenBank/DDBJ databases">
        <title>Brevibacillus brevis strain 47, complete genome.</title>
        <authorList>
            <person name="Hosoyama A."/>
            <person name="Yamada R."/>
            <person name="Hongo Y."/>
            <person name="Terui Y."/>
            <person name="Ankai A."/>
            <person name="Masuyama W."/>
            <person name="Sekiguchi M."/>
            <person name="Takeda T."/>
            <person name="Asano K."/>
            <person name="Ohji S."/>
            <person name="Ichikawa N."/>
            <person name="Narita S."/>
            <person name="Aoki N."/>
            <person name="Miura H."/>
            <person name="Matsushita S."/>
            <person name="Sekigawa T."/>
            <person name="Yamagata H."/>
            <person name="Yoshikawa H."/>
            <person name="Udaka S."/>
            <person name="Tanikawa S."/>
            <person name="Fujita N."/>
        </authorList>
    </citation>
    <scope>NUCLEOTIDE SEQUENCE [LARGE SCALE GENOMIC DNA]</scope>
    <source>
        <strain>47 / JCM 6285 / NBRC 100599</strain>
    </source>
</reference>
<keyword id="KW-0240">DNA-directed RNA polymerase</keyword>
<keyword id="KW-0548">Nucleotidyltransferase</keyword>
<keyword id="KW-1185">Reference proteome</keyword>
<keyword id="KW-0804">Transcription</keyword>
<keyword id="KW-0808">Transferase</keyword>